<organism>
    <name type="scientific">Escherichia coli O7:K1 (strain IAI39 / ExPEC)</name>
    <dbReference type="NCBI Taxonomy" id="585057"/>
    <lineage>
        <taxon>Bacteria</taxon>
        <taxon>Pseudomonadati</taxon>
        <taxon>Pseudomonadota</taxon>
        <taxon>Gammaproteobacteria</taxon>
        <taxon>Enterobacterales</taxon>
        <taxon>Enterobacteriaceae</taxon>
        <taxon>Escherichia</taxon>
    </lineage>
</organism>
<reference key="1">
    <citation type="journal article" date="2009" name="PLoS Genet.">
        <title>Organised genome dynamics in the Escherichia coli species results in highly diverse adaptive paths.</title>
        <authorList>
            <person name="Touchon M."/>
            <person name="Hoede C."/>
            <person name="Tenaillon O."/>
            <person name="Barbe V."/>
            <person name="Baeriswyl S."/>
            <person name="Bidet P."/>
            <person name="Bingen E."/>
            <person name="Bonacorsi S."/>
            <person name="Bouchier C."/>
            <person name="Bouvet O."/>
            <person name="Calteau A."/>
            <person name="Chiapello H."/>
            <person name="Clermont O."/>
            <person name="Cruveiller S."/>
            <person name="Danchin A."/>
            <person name="Diard M."/>
            <person name="Dossat C."/>
            <person name="Karoui M.E."/>
            <person name="Frapy E."/>
            <person name="Garry L."/>
            <person name="Ghigo J.M."/>
            <person name="Gilles A.M."/>
            <person name="Johnson J."/>
            <person name="Le Bouguenec C."/>
            <person name="Lescat M."/>
            <person name="Mangenot S."/>
            <person name="Martinez-Jehanne V."/>
            <person name="Matic I."/>
            <person name="Nassif X."/>
            <person name="Oztas S."/>
            <person name="Petit M.A."/>
            <person name="Pichon C."/>
            <person name="Rouy Z."/>
            <person name="Ruf C.S."/>
            <person name="Schneider D."/>
            <person name="Tourret J."/>
            <person name="Vacherie B."/>
            <person name="Vallenet D."/>
            <person name="Medigue C."/>
            <person name="Rocha E.P.C."/>
            <person name="Denamur E."/>
        </authorList>
    </citation>
    <scope>NUCLEOTIDE SEQUENCE [LARGE SCALE GENOMIC DNA]</scope>
    <source>
        <strain>IAI39 / ExPEC</strain>
    </source>
</reference>
<evidence type="ECO:0000255" key="1">
    <source>
        <dbReference type="HAMAP-Rule" id="MF_00181"/>
    </source>
</evidence>
<name>AMPA_ECO7I</name>
<comment type="function">
    <text evidence="1">Presumably involved in the processing and regular turnover of intracellular proteins. Catalyzes the removal of unsubstituted N-terminal amino acids from various peptides.</text>
</comment>
<comment type="catalytic activity">
    <reaction evidence="1">
        <text>Release of an N-terminal amino acid, Xaa-|-Yaa-, in which Xaa is preferably Leu, but may be other amino acids including Pro although not Arg or Lys, and Yaa may be Pro. Amino acid amides and methyl esters are also readily hydrolyzed, but rates on arylamides are exceedingly low.</text>
        <dbReference type="EC" id="3.4.11.1"/>
    </reaction>
</comment>
<comment type="catalytic activity">
    <reaction evidence="1">
        <text>Release of an N-terminal amino acid, preferentially leucine, but not glutamic or aspartic acids.</text>
        <dbReference type="EC" id="3.4.11.10"/>
    </reaction>
</comment>
<comment type="cofactor">
    <cofactor evidence="1">
        <name>Mn(2+)</name>
        <dbReference type="ChEBI" id="CHEBI:29035"/>
    </cofactor>
    <text evidence="1">Binds 2 manganese ions per subunit.</text>
</comment>
<comment type="subcellular location">
    <subcellularLocation>
        <location evidence="1">Cytoplasm</location>
    </subcellularLocation>
</comment>
<comment type="similarity">
    <text evidence="1">Belongs to the peptidase M17 family.</text>
</comment>
<accession>B7NUH4</accession>
<sequence length="503" mass="54880">MEFSVKSGSPEKQRSACIVVGVFEPRRLSPIAEQLDKISDGYISALLRRGELEGKPGQTLLLHHVPNVLSERILLIGCGKERELDERQYKQVIQKTINTLNDTGSMEAVCFLTELHVKGRNNYWKVRQAVETAKETLYSFDQLKTNKSEPRRPLRKMVFNVPTRRELTSGERAIQHGLAIAAGIKAAKDLGNMPPNICNAAYLASQARQLADSYSKNVITRVIGEQQMKELGMHSYLAVGQGSQNESLMSVIEYKGNASEDARPIVLVGKGLTFDSGGISIKPSEGMDEMKYDMCGAAAVYGVMRMVAELQLPINVIGVLAGCENMPGGRAYRPGDVLTTMSGQTVEVLNTDAEGRLVLCDVLTYVERFEPEAVIDVATLTGACVIALGHHITGLMANHNPLAHELIAASEQSGDRAWRLPLGDEYQEQLESNFADMANIGGRPGGAITAGCFLSRFTRKYNWAHLDIAGTAWRSGKAKGATGRPVALLAQFLLNRAGFNGEE</sequence>
<keyword id="KW-0031">Aminopeptidase</keyword>
<keyword id="KW-0963">Cytoplasm</keyword>
<keyword id="KW-0378">Hydrolase</keyword>
<keyword id="KW-0464">Manganese</keyword>
<keyword id="KW-0479">Metal-binding</keyword>
<keyword id="KW-0645">Protease</keyword>
<protein>
    <recommendedName>
        <fullName evidence="1">Probable cytosol aminopeptidase</fullName>
        <ecNumber evidence="1">3.4.11.1</ecNumber>
    </recommendedName>
    <alternativeName>
        <fullName evidence="1">Leucine aminopeptidase</fullName>
        <shortName evidence="1">LAP</shortName>
        <ecNumber evidence="1">3.4.11.10</ecNumber>
    </alternativeName>
    <alternativeName>
        <fullName evidence="1">Leucyl aminopeptidase</fullName>
    </alternativeName>
</protein>
<gene>
    <name evidence="1" type="primary">pepA</name>
    <name type="ordered locus">ECIAI39_4733</name>
</gene>
<proteinExistence type="inferred from homology"/>
<feature type="chain" id="PRO_1000118453" description="Probable cytosol aminopeptidase">
    <location>
        <begin position="1"/>
        <end position="503"/>
    </location>
</feature>
<feature type="active site" evidence="1">
    <location>
        <position position="282"/>
    </location>
</feature>
<feature type="active site" evidence="1">
    <location>
        <position position="356"/>
    </location>
</feature>
<feature type="binding site" evidence="1">
    <location>
        <position position="270"/>
    </location>
    <ligand>
        <name>Mn(2+)</name>
        <dbReference type="ChEBI" id="CHEBI:29035"/>
        <label>2</label>
    </ligand>
</feature>
<feature type="binding site" evidence="1">
    <location>
        <position position="275"/>
    </location>
    <ligand>
        <name>Mn(2+)</name>
        <dbReference type="ChEBI" id="CHEBI:29035"/>
        <label>1</label>
    </ligand>
</feature>
<feature type="binding site" evidence="1">
    <location>
        <position position="275"/>
    </location>
    <ligand>
        <name>Mn(2+)</name>
        <dbReference type="ChEBI" id="CHEBI:29035"/>
        <label>2</label>
    </ligand>
</feature>
<feature type="binding site" evidence="1">
    <location>
        <position position="293"/>
    </location>
    <ligand>
        <name>Mn(2+)</name>
        <dbReference type="ChEBI" id="CHEBI:29035"/>
        <label>2</label>
    </ligand>
</feature>
<feature type="binding site" evidence="1">
    <location>
        <position position="352"/>
    </location>
    <ligand>
        <name>Mn(2+)</name>
        <dbReference type="ChEBI" id="CHEBI:29035"/>
        <label>1</label>
    </ligand>
</feature>
<feature type="binding site" evidence="1">
    <location>
        <position position="354"/>
    </location>
    <ligand>
        <name>Mn(2+)</name>
        <dbReference type="ChEBI" id="CHEBI:29035"/>
        <label>1</label>
    </ligand>
</feature>
<feature type="binding site" evidence="1">
    <location>
        <position position="354"/>
    </location>
    <ligand>
        <name>Mn(2+)</name>
        <dbReference type="ChEBI" id="CHEBI:29035"/>
        <label>2</label>
    </ligand>
</feature>
<dbReference type="EC" id="3.4.11.1" evidence="1"/>
<dbReference type="EC" id="3.4.11.10" evidence="1"/>
<dbReference type="EMBL" id="CU928164">
    <property type="protein sequence ID" value="CAR20830.1"/>
    <property type="molecule type" value="Genomic_DNA"/>
</dbReference>
<dbReference type="RefSeq" id="WP_000397144.1">
    <property type="nucleotide sequence ID" value="NC_011750.1"/>
</dbReference>
<dbReference type="RefSeq" id="YP_002410592.1">
    <property type="nucleotide sequence ID" value="NC_011750.1"/>
</dbReference>
<dbReference type="SMR" id="B7NUH4"/>
<dbReference type="STRING" id="585057.ECIAI39_4733"/>
<dbReference type="MEROPS" id="M17.003"/>
<dbReference type="GeneID" id="93777558"/>
<dbReference type="KEGG" id="ect:ECIAI39_4733"/>
<dbReference type="PATRIC" id="fig|585057.6.peg.4884"/>
<dbReference type="HOGENOM" id="CLU_013734_2_2_6"/>
<dbReference type="Proteomes" id="UP000000749">
    <property type="component" value="Chromosome"/>
</dbReference>
<dbReference type="GO" id="GO:0005737">
    <property type="term" value="C:cytoplasm"/>
    <property type="evidence" value="ECO:0007669"/>
    <property type="project" value="UniProtKB-SubCell"/>
</dbReference>
<dbReference type="GO" id="GO:0030145">
    <property type="term" value="F:manganese ion binding"/>
    <property type="evidence" value="ECO:0007669"/>
    <property type="project" value="UniProtKB-UniRule"/>
</dbReference>
<dbReference type="GO" id="GO:0070006">
    <property type="term" value="F:metalloaminopeptidase activity"/>
    <property type="evidence" value="ECO:0007669"/>
    <property type="project" value="InterPro"/>
</dbReference>
<dbReference type="GO" id="GO:0006508">
    <property type="term" value="P:proteolysis"/>
    <property type="evidence" value="ECO:0007669"/>
    <property type="project" value="UniProtKB-KW"/>
</dbReference>
<dbReference type="CDD" id="cd00433">
    <property type="entry name" value="Peptidase_M17"/>
    <property type="match status" value="1"/>
</dbReference>
<dbReference type="FunFam" id="3.40.220.10:FF:000001">
    <property type="entry name" value="Probable cytosol aminopeptidase"/>
    <property type="match status" value="1"/>
</dbReference>
<dbReference type="FunFam" id="3.40.630.10:FF:000004">
    <property type="entry name" value="Probable cytosol aminopeptidase"/>
    <property type="match status" value="1"/>
</dbReference>
<dbReference type="Gene3D" id="3.40.220.10">
    <property type="entry name" value="Leucine Aminopeptidase, subunit E, domain 1"/>
    <property type="match status" value="1"/>
</dbReference>
<dbReference type="Gene3D" id="3.40.630.10">
    <property type="entry name" value="Zn peptidases"/>
    <property type="match status" value="1"/>
</dbReference>
<dbReference type="HAMAP" id="MF_00181">
    <property type="entry name" value="Cytosol_peptidase_M17"/>
    <property type="match status" value="1"/>
</dbReference>
<dbReference type="InterPro" id="IPR011356">
    <property type="entry name" value="Leucine_aapep/pepB"/>
</dbReference>
<dbReference type="InterPro" id="IPR043472">
    <property type="entry name" value="Macro_dom-like"/>
</dbReference>
<dbReference type="InterPro" id="IPR000819">
    <property type="entry name" value="Peptidase_M17_C"/>
</dbReference>
<dbReference type="InterPro" id="IPR023042">
    <property type="entry name" value="Peptidase_M17_leu_NH2_pept"/>
</dbReference>
<dbReference type="InterPro" id="IPR008283">
    <property type="entry name" value="Peptidase_M17_N"/>
</dbReference>
<dbReference type="NCBIfam" id="NF002072">
    <property type="entry name" value="PRK00913.1-1"/>
    <property type="match status" value="1"/>
</dbReference>
<dbReference type="NCBIfam" id="NF002073">
    <property type="entry name" value="PRK00913.1-2"/>
    <property type="match status" value="1"/>
</dbReference>
<dbReference type="NCBIfam" id="NF002074">
    <property type="entry name" value="PRK00913.1-4"/>
    <property type="match status" value="1"/>
</dbReference>
<dbReference type="PANTHER" id="PTHR11963:SF23">
    <property type="entry name" value="CYTOSOL AMINOPEPTIDASE"/>
    <property type="match status" value="1"/>
</dbReference>
<dbReference type="PANTHER" id="PTHR11963">
    <property type="entry name" value="LEUCINE AMINOPEPTIDASE-RELATED"/>
    <property type="match status" value="1"/>
</dbReference>
<dbReference type="Pfam" id="PF00883">
    <property type="entry name" value="Peptidase_M17"/>
    <property type="match status" value="1"/>
</dbReference>
<dbReference type="Pfam" id="PF02789">
    <property type="entry name" value="Peptidase_M17_N"/>
    <property type="match status" value="1"/>
</dbReference>
<dbReference type="PRINTS" id="PR00481">
    <property type="entry name" value="LAMNOPPTDASE"/>
</dbReference>
<dbReference type="SUPFAM" id="SSF52949">
    <property type="entry name" value="Macro domain-like"/>
    <property type="match status" value="1"/>
</dbReference>
<dbReference type="SUPFAM" id="SSF53187">
    <property type="entry name" value="Zn-dependent exopeptidases"/>
    <property type="match status" value="1"/>
</dbReference>
<dbReference type="PROSITE" id="PS00631">
    <property type="entry name" value="CYTOSOL_AP"/>
    <property type="match status" value="1"/>
</dbReference>